<feature type="chain" id="PRO_1000124251" description="Inner membrane-spanning protein YciB">
    <location>
        <begin position="1"/>
        <end position="177"/>
    </location>
</feature>
<feature type="transmembrane region" description="Helical" evidence="1">
    <location>
        <begin position="22"/>
        <end position="42"/>
    </location>
</feature>
<feature type="transmembrane region" description="Helical" evidence="1">
    <location>
        <begin position="50"/>
        <end position="70"/>
    </location>
</feature>
<feature type="transmembrane region" description="Helical" evidence="1">
    <location>
        <begin position="76"/>
        <end position="96"/>
    </location>
</feature>
<feature type="transmembrane region" description="Helical" evidence="1">
    <location>
        <begin position="121"/>
        <end position="141"/>
    </location>
</feature>
<feature type="transmembrane region" description="Helical" evidence="1">
    <location>
        <begin position="149"/>
        <end position="169"/>
    </location>
</feature>
<comment type="function">
    <text evidence="1">Plays a role in cell envelope biogenesis, maintenance of cell envelope integrity and membrane homeostasis.</text>
</comment>
<comment type="subcellular location">
    <subcellularLocation>
        <location evidence="1">Cell inner membrane</location>
        <topology evidence="1">Multi-pass membrane protein</topology>
    </subcellularLocation>
</comment>
<comment type="similarity">
    <text evidence="1">Belongs to the YciB family.</text>
</comment>
<name>YCIB_BUCAT</name>
<protein>
    <recommendedName>
        <fullName evidence="1">Inner membrane-spanning protein YciB</fullName>
    </recommendedName>
</protein>
<keyword id="KW-0997">Cell inner membrane</keyword>
<keyword id="KW-1003">Cell membrane</keyword>
<keyword id="KW-0472">Membrane</keyword>
<keyword id="KW-0812">Transmembrane</keyword>
<keyword id="KW-1133">Transmembrane helix</keyword>
<gene>
    <name evidence="1" type="primary">yciB</name>
    <name type="ordered locus">BUAPTUC7_272</name>
</gene>
<reference key="1">
    <citation type="journal article" date="2009" name="Science">
        <title>The dynamics and time scale of ongoing genomic erosion in symbiotic bacteria.</title>
        <authorList>
            <person name="Moran N.A."/>
            <person name="McLaughlin H.J."/>
            <person name="Sorek R."/>
        </authorList>
    </citation>
    <scope>NUCLEOTIDE SEQUENCE [LARGE SCALE GENOMIC DNA]</scope>
    <source>
        <strain>Tuc7</strain>
    </source>
</reference>
<accession>B8D7H2</accession>
<dbReference type="EMBL" id="CP001158">
    <property type="protein sequence ID" value="ACL30087.1"/>
    <property type="molecule type" value="Genomic_DNA"/>
</dbReference>
<dbReference type="RefSeq" id="WP_010896039.1">
    <property type="nucleotide sequence ID" value="NC_011834.1"/>
</dbReference>
<dbReference type="SMR" id="B8D7H2"/>
<dbReference type="KEGG" id="bau:BUAPTUC7_272"/>
<dbReference type="HOGENOM" id="CLU_089554_2_0_6"/>
<dbReference type="GO" id="GO:0005886">
    <property type="term" value="C:plasma membrane"/>
    <property type="evidence" value="ECO:0007669"/>
    <property type="project" value="UniProtKB-SubCell"/>
</dbReference>
<dbReference type="HAMAP" id="MF_00189">
    <property type="entry name" value="YciB"/>
    <property type="match status" value="1"/>
</dbReference>
<dbReference type="InterPro" id="IPR006008">
    <property type="entry name" value="YciB"/>
</dbReference>
<dbReference type="NCBIfam" id="TIGR00997">
    <property type="entry name" value="ispZ"/>
    <property type="match status" value="1"/>
</dbReference>
<dbReference type="NCBIfam" id="NF001324">
    <property type="entry name" value="PRK00259.1-2"/>
    <property type="match status" value="1"/>
</dbReference>
<dbReference type="PANTHER" id="PTHR36917:SF1">
    <property type="entry name" value="INNER MEMBRANE-SPANNING PROTEIN YCIB"/>
    <property type="match status" value="1"/>
</dbReference>
<dbReference type="PANTHER" id="PTHR36917">
    <property type="entry name" value="INTRACELLULAR SEPTATION PROTEIN A-RELATED"/>
    <property type="match status" value="1"/>
</dbReference>
<dbReference type="Pfam" id="PF04279">
    <property type="entry name" value="IspA"/>
    <property type="match status" value="1"/>
</dbReference>
<organism>
    <name type="scientific">Buchnera aphidicola subsp. Acyrthosiphon pisum (strain Tuc7)</name>
    <dbReference type="NCBI Taxonomy" id="561501"/>
    <lineage>
        <taxon>Bacteria</taxon>
        <taxon>Pseudomonadati</taxon>
        <taxon>Pseudomonadota</taxon>
        <taxon>Gammaproteobacteria</taxon>
        <taxon>Enterobacterales</taxon>
        <taxon>Erwiniaceae</taxon>
        <taxon>Buchnera</taxon>
    </lineage>
</organism>
<evidence type="ECO:0000255" key="1">
    <source>
        <dbReference type="HAMAP-Rule" id="MF_00189"/>
    </source>
</evidence>
<sequence>MKQILNILPMFIFFIFYKFYDIFIASGSLIVISGLICIIHWIFYNEIDKISLFSFLSVFFFGSLTIFFHNSQFIKWKITIIYIIFSLVLLISQFFTRKPMIQRFLEKDIKISNIYWRKINFIWSLFFLFCAILNIYIAYYFSETIWVNFKVFGFTSLTFFLILITSIYINCKISKNK</sequence>
<proteinExistence type="inferred from homology"/>